<dbReference type="EC" id="3.2.1.28" evidence="1"/>
<dbReference type="EMBL" id="CP000822">
    <property type="protein sequence ID" value="ABV12349.1"/>
    <property type="molecule type" value="Genomic_DNA"/>
</dbReference>
<dbReference type="RefSeq" id="WP_012132101.1">
    <property type="nucleotide sequence ID" value="NC_009792.1"/>
</dbReference>
<dbReference type="SMR" id="A8AFT6"/>
<dbReference type="STRING" id="290338.CKO_01209"/>
<dbReference type="CAZy" id="GH37">
    <property type="family name" value="Glycoside Hydrolase Family 37"/>
</dbReference>
<dbReference type="GeneID" id="45135336"/>
<dbReference type="KEGG" id="cko:CKO_01209"/>
<dbReference type="HOGENOM" id="CLU_006451_3_1_6"/>
<dbReference type="OrthoDB" id="106887at2"/>
<dbReference type="Proteomes" id="UP000008148">
    <property type="component" value="Chromosome"/>
</dbReference>
<dbReference type="GO" id="GO:0042597">
    <property type="term" value="C:periplasmic space"/>
    <property type="evidence" value="ECO:0007669"/>
    <property type="project" value="UniProtKB-SubCell"/>
</dbReference>
<dbReference type="GO" id="GO:0004555">
    <property type="term" value="F:alpha,alpha-trehalase activity"/>
    <property type="evidence" value="ECO:0007669"/>
    <property type="project" value="UniProtKB-UniRule"/>
</dbReference>
<dbReference type="GO" id="GO:0071474">
    <property type="term" value="P:cellular hyperosmotic response"/>
    <property type="evidence" value="ECO:0007669"/>
    <property type="project" value="InterPro"/>
</dbReference>
<dbReference type="GO" id="GO:0005993">
    <property type="term" value="P:trehalose catabolic process"/>
    <property type="evidence" value="ECO:0007669"/>
    <property type="project" value="InterPro"/>
</dbReference>
<dbReference type="FunFam" id="1.50.10.10:FF:000003">
    <property type="entry name" value="Cytoplasmic trehalase"/>
    <property type="match status" value="1"/>
</dbReference>
<dbReference type="Gene3D" id="1.50.10.10">
    <property type="match status" value="1"/>
</dbReference>
<dbReference type="HAMAP" id="MF_01060">
    <property type="entry name" value="Peripl_trehalase"/>
    <property type="match status" value="1"/>
</dbReference>
<dbReference type="InterPro" id="IPR008928">
    <property type="entry name" value="6-hairpin_glycosidase_sf"/>
</dbReference>
<dbReference type="InterPro" id="IPR012341">
    <property type="entry name" value="6hp_glycosidase-like_sf"/>
</dbReference>
<dbReference type="InterPro" id="IPR001661">
    <property type="entry name" value="Glyco_hydro_37"/>
</dbReference>
<dbReference type="InterPro" id="IPR018232">
    <property type="entry name" value="Glyco_hydro_37_CS"/>
</dbReference>
<dbReference type="InterPro" id="IPR023720">
    <property type="entry name" value="Trehalase_periplasmic"/>
</dbReference>
<dbReference type="NCBIfam" id="NF009773">
    <property type="entry name" value="PRK13270.1"/>
    <property type="match status" value="1"/>
</dbReference>
<dbReference type="NCBIfam" id="NF009774">
    <property type="entry name" value="PRK13271.1"/>
    <property type="match status" value="1"/>
</dbReference>
<dbReference type="PANTHER" id="PTHR23403">
    <property type="entry name" value="TREHALASE"/>
    <property type="match status" value="1"/>
</dbReference>
<dbReference type="PANTHER" id="PTHR23403:SF1">
    <property type="entry name" value="TREHALASE"/>
    <property type="match status" value="1"/>
</dbReference>
<dbReference type="Pfam" id="PF01204">
    <property type="entry name" value="Trehalase"/>
    <property type="match status" value="1"/>
</dbReference>
<dbReference type="PRINTS" id="PR00744">
    <property type="entry name" value="GLHYDRLASE37"/>
</dbReference>
<dbReference type="SUPFAM" id="SSF48208">
    <property type="entry name" value="Six-hairpin glycosidases"/>
    <property type="match status" value="1"/>
</dbReference>
<dbReference type="PROSITE" id="PS00927">
    <property type="entry name" value="TREHALASE_1"/>
    <property type="match status" value="1"/>
</dbReference>
<dbReference type="PROSITE" id="PS00928">
    <property type="entry name" value="TREHALASE_2"/>
    <property type="match status" value="1"/>
</dbReference>
<reference key="1">
    <citation type="submission" date="2007-08" db="EMBL/GenBank/DDBJ databases">
        <authorList>
            <consortium name="The Citrobacter koseri Genome Sequencing Project"/>
            <person name="McClelland M."/>
            <person name="Sanderson E.K."/>
            <person name="Porwollik S."/>
            <person name="Spieth J."/>
            <person name="Clifton W.S."/>
            <person name="Latreille P."/>
            <person name="Courtney L."/>
            <person name="Wang C."/>
            <person name="Pepin K."/>
            <person name="Bhonagiri V."/>
            <person name="Nash W."/>
            <person name="Johnson M."/>
            <person name="Thiruvilangam P."/>
            <person name="Wilson R."/>
        </authorList>
    </citation>
    <scope>NUCLEOTIDE SEQUENCE [LARGE SCALE GENOMIC DNA]</scope>
    <source>
        <strain>ATCC BAA-895 / CDC 4225-83 / SGSC4696</strain>
    </source>
</reference>
<feature type="signal peptide" evidence="1">
    <location>
        <begin position="1"/>
        <end position="34"/>
    </location>
</feature>
<feature type="chain" id="PRO_1000064449" description="Periplasmic trehalase">
    <location>
        <begin position="35"/>
        <end position="570"/>
    </location>
</feature>
<feature type="region of interest" description="Disordered" evidence="2">
    <location>
        <begin position="542"/>
        <end position="570"/>
    </location>
</feature>
<feature type="compositionally biased region" description="Low complexity" evidence="2">
    <location>
        <begin position="552"/>
        <end position="570"/>
    </location>
</feature>
<feature type="active site" description="Proton donor/acceptor" evidence="1">
    <location>
        <position position="317"/>
    </location>
</feature>
<feature type="active site" description="Proton donor/acceptor" evidence="1">
    <location>
        <position position="501"/>
    </location>
</feature>
<feature type="binding site" evidence="1">
    <location>
        <position position="157"/>
    </location>
    <ligand>
        <name>substrate</name>
    </ligand>
</feature>
<feature type="binding site" evidence="1">
    <location>
        <begin position="164"/>
        <end position="165"/>
    </location>
    <ligand>
        <name>substrate</name>
    </ligand>
</feature>
<feature type="binding site" evidence="1">
    <location>
        <position position="201"/>
    </location>
    <ligand>
        <name>substrate</name>
    </ligand>
</feature>
<feature type="binding site" evidence="1">
    <location>
        <begin position="210"/>
        <end position="212"/>
    </location>
    <ligand>
        <name>substrate</name>
    </ligand>
</feature>
<feature type="binding site" evidence="1">
    <location>
        <begin position="282"/>
        <end position="284"/>
    </location>
    <ligand>
        <name>substrate</name>
    </ligand>
</feature>
<feature type="binding site" evidence="1">
    <location>
        <position position="315"/>
    </location>
    <ligand>
        <name>substrate</name>
    </ligand>
</feature>
<feature type="binding site" evidence="1">
    <location>
        <position position="516"/>
    </location>
    <ligand>
        <name>substrate</name>
    </ligand>
</feature>
<evidence type="ECO:0000255" key="1">
    <source>
        <dbReference type="HAMAP-Rule" id="MF_01060"/>
    </source>
</evidence>
<evidence type="ECO:0000256" key="2">
    <source>
        <dbReference type="SAM" id="MobiDB-lite"/>
    </source>
</evidence>
<name>TREA_CITK8</name>
<keyword id="KW-0326">Glycosidase</keyword>
<keyword id="KW-0378">Hydrolase</keyword>
<keyword id="KW-0574">Periplasm</keyword>
<keyword id="KW-1185">Reference proteome</keyword>
<keyword id="KW-0732">Signal</keyword>
<sequence length="570" mass="63731">MITPALRHSGTLSFAIKLTVASTLLTFASLSAHAEEQPASPPQPPDILLGPLFNDVQSVKLFPDQKTFADAVPNSDPLMILADYRMQRNQSGFDLRHFVDVNFTLPKEGEKYVPPEGQSLREHIDGLWPVLTRTTESAGKWDSLLPLPEPYVVPGGRFREVYYWDSYFTMLGLAESDHWDKVADMVANFGYELDSWGHIPNGNRTYYLSRSQPPFFAFMVELLAQHEGDDALKKYLPQLQKEYAYWMEGVENLQPGEQNKRVVKLDDGTVLNRYWDDRDTPRPESWMEDITTAKSNPNRPATEIYRDLRSAAASGWDFSSRWMDDPNQLSTIRTTSIVPVDLNALLYKLEKMLARASKAAGDDANANQYEALASARQKGIETHLWNNQEGWYADYDLKSKKVRNQLTAATLFPLYVNAAAKDRASKVAAATQAHLLQPGGLSTTSVKSGQQWDAPNGWAPLQWVATEGLQNYGQDNVAMDVTWRFLTNVQHTYDREQKLVEKYDVSSTGTGGGGGEYPLQDGFGWTNGVTLKMLDLICPKEKPCDSVPATRPAAPGASQPAPQKQVETTP</sequence>
<organism>
    <name type="scientific">Citrobacter koseri (strain ATCC BAA-895 / CDC 4225-83 / SGSC4696)</name>
    <dbReference type="NCBI Taxonomy" id="290338"/>
    <lineage>
        <taxon>Bacteria</taxon>
        <taxon>Pseudomonadati</taxon>
        <taxon>Pseudomonadota</taxon>
        <taxon>Gammaproteobacteria</taxon>
        <taxon>Enterobacterales</taxon>
        <taxon>Enterobacteriaceae</taxon>
        <taxon>Citrobacter</taxon>
    </lineage>
</organism>
<comment type="function">
    <text evidence="1">Provides the cells with the ability to utilize trehalose at high osmolarity by splitting it into glucose molecules that can subsequently be taken up by the phosphotransferase-mediated uptake system.</text>
</comment>
<comment type="catalytic activity">
    <reaction evidence="1">
        <text>alpha,alpha-trehalose + H2O = alpha-D-glucose + beta-D-glucose</text>
        <dbReference type="Rhea" id="RHEA:32675"/>
        <dbReference type="ChEBI" id="CHEBI:15377"/>
        <dbReference type="ChEBI" id="CHEBI:15903"/>
        <dbReference type="ChEBI" id="CHEBI:16551"/>
        <dbReference type="ChEBI" id="CHEBI:17925"/>
        <dbReference type="EC" id="3.2.1.28"/>
    </reaction>
</comment>
<comment type="subunit">
    <text evidence="1">Monomer.</text>
</comment>
<comment type="subcellular location">
    <subcellularLocation>
        <location evidence="1">Periplasm</location>
    </subcellularLocation>
</comment>
<comment type="similarity">
    <text evidence="1">Belongs to the glycosyl hydrolase 37 family.</text>
</comment>
<proteinExistence type="inferred from homology"/>
<protein>
    <recommendedName>
        <fullName evidence="1">Periplasmic trehalase</fullName>
        <ecNumber evidence="1">3.2.1.28</ecNumber>
    </recommendedName>
    <alternativeName>
        <fullName evidence="1">Alpha,alpha-trehalase</fullName>
    </alternativeName>
    <alternativeName>
        <fullName evidence="1">Alpha,alpha-trehalose glucohydrolase</fullName>
    </alternativeName>
</protein>
<gene>
    <name evidence="1" type="primary">treA</name>
    <name type="ordered locus">CKO_01209</name>
</gene>
<accession>A8AFT6</accession>